<proteinExistence type="evidence at protein level"/>
<protein>
    <recommendedName>
        <fullName evidence="5">Nucleoside transporter 2</fullName>
        <shortName evidence="5 6">CfNT2</shortName>
    </recommendedName>
    <alternativeName>
        <fullName evidence="6">Equilibrative nucleoside transporter 2</fullName>
    </alternativeName>
</protein>
<dbReference type="EMBL" id="AF261947">
    <property type="protein sequence ID" value="AAG22611.1"/>
    <property type="molecule type" value="Genomic_DNA"/>
</dbReference>
<dbReference type="TCDB" id="2.A.57.2.8">
    <property type="family name" value="the equilibrative nucleoside transporter (ent) family"/>
</dbReference>
<dbReference type="VEuPathDB" id="TriTrypDB:CFAC1_250030000"/>
<dbReference type="GO" id="GO:0005886">
    <property type="term" value="C:plasma membrane"/>
    <property type="evidence" value="ECO:0007669"/>
    <property type="project" value="UniProtKB-SubCell"/>
</dbReference>
<dbReference type="GO" id="GO:0005337">
    <property type="term" value="F:nucleoside transmembrane transporter activity"/>
    <property type="evidence" value="ECO:0007669"/>
    <property type="project" value="InterPro"/>
</dbReference>
<dbReference type="InterPro" id="IPR002259">
    <property type="entry name" value="Eqnu_transpt"/>
</dbReference>
<dbReference type="InterPro" id="IPR036259">
    <property type="entry name" value="MFS_trans_sf"/>
</dbReference>
<dbReference type="PANTHER" id="PTHR10332">
    <property type="entry name" value="EQUILIBRATIVE NUCLEOSIDE TRANSPORTER"/>
    <property type="match status" value="1"/>
</dbReference>
<dbReference type="PANTHER" id="PTHR10332:SF82">
    <property type="entry name" value="TRANSPORTER 2, PUTATIVE-RELATED"/>
    <property type="match status" value="1"/>
</dbReference>
<dbReference type="Pfam" id="PF01733">
    <property type="entry name" value="Nucleoside_tran"/>
    <property type="match status" value="1"/>
</dbReference>
<dbReference type="SUPFAM" id="SSF103473">
    <property type="entry name" value="MFS general substrate transporter"/>
    <property type="match status" value="1"/>
</dbReference>
<accession>Q9GTP4</accession>
<feature type="chain" id="PRO_0000461590" description="Nucleoside transporter 2">
    <location>
        <begin position="1"/>
        <end position="502"/>
    </location>
</feature>
<feature type="topological domain" description="Cytoplasmic" evidence="6">
    <location>
        <begin position="1"/>
        <end position="30"/>
    </location>
</feature>
<feature type="transmembrane region" description="Helical" evidence="1">
    <location>
        <begin position="31"/>
        <end position="51"/>
    </location>
</feature>
<feature type="topological domain" description="Extracellular" evidence="6">
    <location>
        <begin position="52"/>
        <end position="81"/>
    </location>
</feature>
<feature type="transmembrane region" description="Helical" evidence="1">
    <location>
        <begin position="82"/>
        <end position="102"/>
    </location>
</feature>
<feature type="topological domain" description="Cytoplasmic" evidence="6">
    <location>
        <begin position="103"/>
        <end position="111"/>
    </location>
</feature>
<feature type="transmembrane region" description="Helical" evidence="1">
    <location>
        <begin position="112"/>
        <end position="132"/>
    </location>
</feature>
<feature type="topological domain" description="Extracellular" evidence="6">
    <location>
        <begin position="133"/>
        <end position="137"/>
    </location>
</feature>
<feature type="transmembrane region" description="Helical" evidence="1">
    <location>
        <begin position="138"/>
        <end position="158"/>
    </location>
</feature>
<feature type="topological domain" description="Cytoplasmic" evidence="6">
    <location>
        <begin position="159"/>
        <end position="178"/>
    </location>
</feature>
<feature type="transmembrane region" description="Helical" evidence="1">
    <location>
        <begin position="179"/>
        <end position="199"/>
    </location>
</feature>
<feature type="topological domain" description="Extracellular" evidence="6">
    <location>
        <begin position="200"/>
        <end position="210"/>
    </location>
</feature>
<feature type="transmembrane region" description="Helical" evidence="1">
    <location>
        <begin position="211"/>
        <end position="231"/>
    </location>
</feature>
<feature type="topological domain" description="Cytoplasmic" evidence="6">
    <location>
        <begin position="232"/>
        <end position="352"/>
    </location>
</feature>
<feature type="transmembrane region" description="Helical" evidence="1">
    <location>
        <begin position="353"/>
        <end position="373"/>
    </location>
</feature>
<feature type="topological domain" description="Extracellular" evidence="6">
    <location>
        <begin position="374"/>
        <end position="380"/>
    </location>
</feature>
<feature type="transmembrane region" description="Helical" evidence="1">
    <location>
        <begin position="381"/>
        <end position="401"/>
    </location>
</feature>
<feature type="topological domain" description="Cytoplasmic" evidence="6">
    <location>
        <begin position="402"/>
        <end position="408"/>
    </location>
</feature>
<feature type="transmembrane region" description="Helical" evidence="1">
    <location>
        <begin position="409"/>
        <end position="429"/>
    </location>
</feature>
<feature type="topological domain" description="Extracellular" evidence="6">
    <location>
        <begin position="430"/>
        <end position="436"/>
    </location>
</feature>
<feature type="transmembrane region" description="Helical" evidence="1">
    <location>
        <begin position="437"/>
        <end position="457"/>
    </location>
</feature>
<feature type="topological domain" description="Cytoplasmic" evidence="6">
    <location>
        <begin position="458"/>
        <end position="477"/>
    </location>
</feature>
<feature type="transmembrane region" description="Helical" evidence="1">
    <location>
        <begin position="478"/>
        <end position="498"/>
    </location>
</feature>
<feature type="topological domain" description="Extracellular" evidence="6">
    <location>
        <begin position="499"/>
        <end position="502"/>
    </location>
</feature>
<feature type="region of interest" description="Disordered" evidence="2">
    <location>
        <begin position="252"/>
        <end position="273"/>
    </location>
</feature>
<feature type="mutagenesis site" description="Confers adenosine transport activity." evidence="4">
    <original>V</original>
    <variation>V</variation>
    <variation>S</variation>
    <location>
        <position position="89"/>
    </location>
</feature>
<feature type="mutagenesis site" description="No significant effects on inosine uptake." evidence="4">
    <original>H</original>
    <variation>C</variation>
    <location>
        <position position="138"/>
    </location>
</feature>
<feature type="mutagenesis site" description="No significant effects on inosine uptake." evidence="4">
    <original>G</original>
    <variation>C</variation>
    <location>
        <position position="139"/>
    </location>
</feature>
<feature type="mutagenesis site" description="No significant effects on inosine uptake." evidence="4">
    <original>A</original>
    <variation>C</variation>
    <location>
        <position position="140"/>
    </location>
</feature>
<feature type="mutagenesis site" description="No significant effects on inosine uptake." evidence="4">
    <original>I</original>
    <variation>C</variation>
    <location>
        <position position="141"/>
    </location>
</feature>
<feature type="mutagenesis site" description="No significant effects on inosine uptake." evidence="4">
    <original>A</original>
    <variation>C</variation>
    <location>
        <position position="142"/>
    </location>
</feature>
<feature type="mutagenesis site" description="No significant effects on inosine uptake." evidence="4">
    <original>V</original>
    <variation>C</variation>
    <location>
        <position position="143"/>
    </location>
</feature>
<feature type="mutagenesis site" description="No significant effects on inosine uptake." evidence="4">
    <original>I</original>
    <variation>C</variation>
    <location>
        <position position="144"/>
    </location>
</feature>
<feature type="mutagenesis site" description="No significant effects on inosine uptake." evidence="4">
    <original>M</original>
    <variation>C</variation>
    <location>
        <position position="145"/>
    </location>
</feature>
<feature type="mutagenesis site" description="No significant effects on inosine uptake." evidence="4">
    <original>V</original>
    <variation>C</variation>
    <location>
        <position position="146"/>
    </location>
</feature>
<feature type="mutagenesis site" description="No significant effects on inosine uptake." evidence="4">
    <original>V</original>
    <variation>C</variation>
    <location>
        <position position="147"/>
    </location>
</feature>
<feature type="mutagenesis site" description="No significant effects on inosine uptake." evidence="4">
    <original>A</original>
    <variation>C</variation>
    <location>
        <position position="148"/>
    </location>
</feature>
<feature type="mutagenesis site" description="No significant effects on inosine uptake." evidence="4">
    <original>V</original>
    <variation>C</variation>
    <location>
        <position position="150"/>
    </location>
</feature>
<feature type="mutagenesis site" description="No significant effects on inosine uptake." evidence="4">
    <original>G</original>
    <variation>C</variation>
    <location>
        <position position="151"/>
    </location>
</feature>
<feature type="mutagenesis site" description="Reduces inosine uptake." evidence="4">
    <original>G</original>
    <variation>C</variation>
    <location>
        <position position="152"/>
    </location>
</feature>
<feature type="mutagenesis site" description="No significant effects on inosine uptake." evidence="4">
    <original>F</original>
    <variation>C</variation>
    <location>
        <position position="153"/>
    </location>
</feature>
<feature type="mutagenesis site" description="Reduces inosine uptake." evidence="4">
    <original>S</original>
    <variation>C</variation>
    <location>
        <position position="154"/>
    </location>
</feature>
<feature type="mutagenesis site" description="Confers adenosine uptake. Reduces inosine uptake. Retains significant cell surface expression. Increases sensitivity to tubercidin. Does not affect sensitivity to formycin B." evidence="4">
    <original>K</original>
    <variation>A</variation>
    <location>
        <position position="155"/>
    </location>
</feature>
<feature type="mutagenesis site" description="Reduces inosine uptake." evidence="4">
    <original>K</original>
    <variation>C</variation>
    <location>
        <position position="155"/>
    </location>
</feature>
<feature type="mutagenesis site" description="Abolishes inosine uptake. Retains significant cell surface expression. Increases sensitivity to tubercidin. Decreases sensitivity to formycin B." evidence="4">
    <original>K</original>
    <variation>E</variation>
    <location>
        <position position="155"/>
    </location>
</feature>
<feature type="mutagenesis site" description="Abolishes inosine uptake. Retains significant cell surface expression. Results in resistance to both tubercidin and formycin B." evidence="4">
    <original>K</original>
    <variation>L</variation>
    <location>
        <position position="155"/>
    </location>
</feature>
<feature type="mutagenesis site" description="Abolishes inosine uptake. Retains significant cell surface expression. Does not affect resistance to tubercidin. Does not affect sensitivity to formycin B." evidence="4">
    <original>K</original>
    <variation>M</variation>
    <location>
        <position position="155"/>
    </location>
</feature>
<feature type="mutagenesis site" description="Confers adenosine uptake. Reduces inosine uptake. Retains significant cell surface expression. Increases sensitivity to tubercidin. Decreases sensitivity to formycin B." evidence="4">
    <original>K</original>
    <variation>N</variation>
    <location>
        <position position="155"/>
    </location>
</feature>
<feature type="mutagenesis site" description="Reduces inosine uptake. Retains significant cell surface expression. Increases sensitivity to tubercidin. Does not affect sensitivity to formycin B." evidence="4">
    <original>K</original>
    <variation>Q</variation>
    <variation>T</variation>
    <location>
        <position position="155"/>
    </location>
</feature>
<feature type="mutagenesis site" description="Reduces inosine uptake. Retains significant cell surface expression. Does not affect resistance to tubercidin. Does not affect sensitivity to formycin B." evidence="4">
    <original>K</original>
    <variation>R</variation>
    <location>
        <position position="155"/>
    </location>
</feature>
<feature type="mutagenesis site" description="Abolishes inosine uptake. Retains significant cell surface expression. Does not affect resistance to tubercidin. Confers resistance to formycin B." evidence="4">
    <original>K</original>
    <variation>Y</variation>
    <location>
        <position position="155"/>
    </location>
</feature>
<feature type="mutagenesis site" description="Reduces inosine uptake." evidence="4">
    <original>A</original>
    <variation>C</variation>
    <location>
        <position position="156"/>
    </location>
</feature>
<feature type="mutagenesis site" description="No significant effects on inosine uptake." evidence="4">
    <original>L</original>
    <variation>C</variation>
    <location>
        <position position="157"/>
    </location>
</feature>
<feature type="mutagenesis site" description="Confers adenosine transport activity." evidence="4">
    <original>D</original>
    <variation>A</variation>
    <variation>G</variation>
    <variation>N</variation>
    <location>
        <position position="159"/>
    </location>
</feature>
<feature type="mutagenesis site" description="No significant effects on inosine uptake." evidence="4">
    <original>D</original>
    <variation>C</variation>
    <location>
        <position position="159"/>
    </location>
</feature>
<feature type="mutagenesis site" description="No significant effects on inosine uptake." evidence="4">
    <original>S</original>
    <variation>C</variation>
    <location>
        <position position="160"/>
    </location>
</feature>
<feature type="mutagenesis site" description="No significant effects on inosine uptake." evidence="4">
    <original>T</original>
    <variation>C</variation>
    <location>
        <position position="162"/>
    </location>
</feature>
<feature type="mutagenesis site" description="No significant effects on inosine uptake." evidence="4">
    <original>N</original>
    <variation>C</variation>
    <location>
        <position position="163"/>
    </location>
</feature>
<feature type="mutagenesis site" description="No significant effects on inosine uptake." evidence="4">
    <original>A</original>
    <variation>C</variation>
    <location>
        <position position="164"/>
    </location>
</feature>
<feature type="mutagenesis site" description="No significant effects on inosine uptake." evidence="4">
    <original>L</original>
    <variation>C</variation>
    <location>
        <position position="165"/>
    </location>
</feature>
<feature type="mutagenesis site" description="No significant effects on inosine uptake." evidence="4">
    <original>V</original>
    <variation>C</variation>
    <location>
        <position position="166"/>
    </location>
</feature>
<feature type="mutagenesis site" description="No significant effects on inosine uptake." evidence="4">
    <original>G</original>
    <variation>C</variation>
    <location>
        <position position="167"/>
    </location>
</feature>
<feature type="mutagenesis site" description="No significant effects on inosine uptake." evidence="4">
    <original>P</original>
    <variation>C</variation>
    <location>
        <position position="168"/>
    </location>
</feature>
<feature type="mutagenesis site" description="No significant effects on inosine uptake." evidence="4">
    <original>F</original>
    <variation>C</variation>
    <location>
        <position position="169"/>
    </location>
</feature>
<feature type="mutagenesis site" description="No significant effects on inosine uptake." evidence="4">
    <original>P</original>
    <variation>C</variation>
    <location>
        <position position="170"/>
    </location>
</feature>
<feature type="mutagenesis site" description="No significant effects on inosine uptake." evidence="4">
    <original>T</original>
    <variation>C</variation>
    <location>
        <position position="171"/>
    </location>
</feature>
<feature type="mutagenesis site" description="No significant effects on inosine uptake." evidence="4">
    <original>K</original>
    <variation>C</variation>
    <location>
        <position position="172"/>
    </location>
</feature>
<evidence type="ECO:0000255" key="1"/>
<evidence type="ECO:0000256" key="2">
    <source>
        <dbReference type="SAM" id="MobiDB-lite"/>
    </source>
</evidence>
<evidence type="ECO:0000269" key="3">
    <source>
    </source>
</evidence>
<evidence type="ECO:0000269" key="4">
    <source>
    </source>
</evidence>
<evidence type="ECO:0000303" key="5">
    <source>
    </source>
</evidence>
<evidence type="ECO:0000303" key="6">
    <source>
    </source>
</evidence>
<evidence type="ECO:0000305" key="7"/>
<evidence type="ECO:0000312" key="8">
    <source>
        <dbReference type="EMBL" id="AAG22611.1"/>
    </source>
</evidence>
<name>NT2_CRIFA</name>
<reference evidence="8" key="1">
    <citation type="submission" date="2000-04" db="EMBL/GenBank/DDBJ databases">
        <title>Isolation and Functional Characterization of the CfNT1 and CfNT2 nucleoside transporter Genes from Crithidia fasciculata.</title>
        <authorList>
            <person name="Liu W."/>
            <person name="Ntaba D."/>
            <person name="Carter N.S."/>
            <person name="Landfear S.M."/>
            <person name="Ullman B."/>
        </authorList>
    </citation>
    <scope>NUCLEOTIDE SEQUENCE [GENOMIC DNA]</scope>
</reference>
<reference evidence="7" key="2">
    <citation type="journal article" date="2005" name="Mol. Biochem. Parasitol.">
        <title>Identification and characterization of purine nucleoside transporters from Crithidia fasciculata.</title>
        <authorList>
            <person name="Liu W."/>
            <person name="Arendt C.S."/>
            <person name="Gessford S.K."/>
            <person name="Ntaba D."/>
            <person name="Carter N.S."/>
            <person name="Ullman B."/>
        </authorList>
    </citation>
    <scope>FUNCTION</scope>
    <scope>TRANSPORTER ACTIVITY</scope>
    <scope>BIOPHYSICOCHEMICAL PROPERTIES</scope>
    <scope>INDUCTION</scope>
</reference>
<reference evidence="7" key="3">
    <citation type="journal article" date="2010" name="J. Biol. Chem.">
        <title>Role of transmembrane domain 4 in ligand permeation by Crithidia fasciculata equilibrative nucleoside transporter 2 (CfNT2).</title>
        <authorList>
            <person name="Arendt C.S."/>
            <person name="Ullman B."/>
        </authorList>
    </citation>
    <scope>FUNCTION</scope>
    <scope>TRANSPORTER ACTIVITY</scope>
    <scope>SUBCELLULAR LOCATION</scope>
    <scope>MUTAGENESIS OF VAL-89; HIS-138; GLY-139; ALA-140; ILE-141; ALA-142; VAL-143; ILE-144; MET-145; VAL-146; VAL-147; ALA-148; VAL-150; GLY-151; GLY-152; PHE-153; SER-154; LYS-155; ALA-156; LEU-157; ASP-159; SER-160; THR-162; ASN-163; ALA-164; LEU-165; VAL-166; GLY-167; PRO-168; PHE-169; PRO-170; THR-171 AND LYS-172</scope>
</reference>
<keyword id="KW-1003">Cell membrane</keyword>
<keyword id="KW-0472">Membrane</keyword>
<keyword id="KW-0812">Transmembrane</keyword>
<keyword id="KW-1133">Transmembrane helix</keyword>
<keyword id="KW-0813">Transport</keyword>
<comment type="function">
    <text evidence="3 4">High affinity transporter for inosine and guanosine.</text>
</comment>
<comment type="catalytic activity">
    <reaction evidence="3 4">
        <text>inosine(in) = inosine(out)</text>
        <dbReference type="Rhea" id="RHEA:75375"/>
        <dbReference type="ChEBI" id="CHEBI:17596"/>
    </reaction>
</comment>
<comment type="catalytic activity">
    <reaction evidence="3">
        <text>guanosine(in) = guanosine(out)</text>
        <dbReference type="Rhea" id="RHEA:75371"/>
        <dbReference type="ChEBI" id="CHEBI:16750"/>
    </reaction>
</comment>
<comment type="biophysicochemical properties">
    <kinetics>
        <KM evidence="3">1 uM for inosine</KM>
        <KM evidence="3">5 uM for guanosine</KM>
    </kinetics>
</comment>
<comment type="subcellular location">
    <subcellularLocation>
        <location evidence="4">Cell membrane</location>
        <topology evidence="1">Multi-pass membrane protein</topology>
    </subcellularLocation>
</comment>
<comment type="induction">
    <text evidence="3">Pufine starvation does not affect expression.</text>
</comment>
<comment type="miscellaneous">
    <text evidence="4">Can transport formycin B, a toxic inosine analog, but not tubercidin, a toxic adenosine analog.</text>
</comment>
<comment type="similarity">
    <text evidence="7">Belongs to the SLC29A/ENT transporter (TC 2.A.57) family.</text>
</comment>
<sequence>MTTSSDSAMVNHTPSPWYKFGFKSFAEFNTYVTFVFLGMSIMMVASAVTSAPDFLTRYYVYATGDPDAVAETPLFWNNANTFYNAGTYVLQVLTELFSLTPFMRRIPLSVRLFVGLGIPFAELLLIIIVPAATIKSQHGAIAVIMVVACVGGFSKALCDSCTNALVGPFPTKFMNGAQWGLTVIALLMSIIQIILKVSMGTSFHDILTMSRIYFGICIGIQLFAIFELAILRFNPFAQKYIAEYRAGAQRNAQNNESTLEETAPSMNEPAAGDIADLPATVDDKERALNEEEGDEVRAVTSEEFHVKRGAVLTATGDADKMVDLDQTGNITSTEQLLRASAASVFKRVYPMLVCVFLIYFTSLLTFPGVFFLVSTTSGWYMTVIVTLFNAGDFISRMVLMFRPLRPSPKVVVAGTLGRLIIIPFLVLCVRGIIRGEALPYVLITLLGLTNGYFGCMACIHCPRTTTLRYAGERSLAAMLSGISIMLGLCFGSNLSLAITLTH</sequence>
<organism evidence="8">
    <name type="scientific">Crithidia fasciculata</name>
    <dbReference type="NCBI Taxonomy" id="5656"/>
    <lineage>
        <taxon>Eukaryota</taxon>
        <taxon>Discoba</taxon>
        <taxon>Euglenozoa</taxon>
        <taxon>Kinetoplastea</taxon>
        <taxon>Metakinetoplastina</taxon>
        <taxon>Trypanosomatida</taxon>
        <taxon>Trypanosomatidae</taxon>
        <taxon>Leishmaniinae</taxon>
        <taxon>Crithidia</taxon>
    </lineage>
</organism>